<organism>
    <name type="scientific">Pseudomonas syringae pv. syringae (strain B728a)</name>
    <dbReference type="NCBI Taxonomy" id="205918"/>
    <lineage>
        <taxon>Bacteria</taxon>
        <taxon>Pseudomonadati</taxon>
        <taxon>Pseudomonadota</taxon>
        <taxon>Gammaproteobacteria</taxon>
        <taxon>Pseudomonadales</taxon>
        <taxon>Pseudomonadaceae</taxon>
        <taxon>Pseudomonas</taxon>
        <taxon>Pseudomonas syringae</taxon>
    </lineage>
</organism>
<dbReference type="EMBL" id="CP000075">
    <property type="protein sequence ID" value="AAY35646.1"/>
    <property type="molecule type" value="Genomic_DNA"/>
</dbReference>
<dbReference type="RefSeq" id="WP_003402926.1">
    <property type="nucleotide sequence ID" value="NC_007005.1"/>
</dbReference>
<dbReference type="RefSeq" id="YP_233684.1">
    <property type="nucleotide sequence ID" value="NC_007005.1"/>
</dbReference>
<dbReference type="SMR" id="Q4ZYX6"/>
<dbReference type="STRING" id="205918.Psyr_0576"/>
<dbReference type="KEGG" id="psb:Psyr_0576"/>
<dbReference type="PATRIC" id="fig|205918.7.peg.599"/>
<dbReference type="eggNOG" id="COG3705">
    <property type="taxonomic scope" value="Bacteria"/>
</dbReference>
<dbReference type="HOGENOM" id="CLU_025113_0_1_6"/>
<dbReference type="OrthoDB" id="9769617at2"/>
<dbReference type="UniPathway" id="UPA00031">
    <property type="reaction ID" value="UER00006"/>
</dbReference>
<dbReference type="Proteomes" id="UP000000426">
    <property type="component" value="Chromosome"/>
</dbReference>
<dbReference type="GO" id="GO:0005737">
    <property type="term" value="C:cytoplasm"/>
    <property type="evidence" value="ECO:0007669"/>
    <property type="project" value="UniProtKB-SubCell"/>
</dbReference>
<dbReference type="GO" id="GO:0000105">
    <property type="term" value="P:L-histidine biosynthetic process"/>
    <property type="evidence" value="ECO:0007669"/>
    <property type="project" value="UniProtKB-UniRule"/>
</dbReference>
<dbReference type="CDD" id="cd00773">
    <property type="entry name" value="HisRS-like_core"/>
    <property type="match status" value="1"/>
</dbReference>
<dbReference type="Gene3D" id="3.30.930.10">
    <property type="entry name" value="Bira Bifunctional Protein, Domain 2"/>
    <property type="match status" value="1"/>
</dbReference>
<dbReference type="HAMAP" id="MF_00125">
    <property type="entry name" value="HisZ"/>
    <property type="match status" value="1"/>
</dbReference>
<dbReference type="InterPro" id="IPR045864">
    <property type="entry name" value="aa-tRNA-synth_II/BPL/LPL"/>
</dbReference>
<dbReference type="InterPro" id="IPR041715">
    <property type="entry name" value="HisRS-like_core"/>
</dbReference>
<dbReference type="InterPro" id="IPR004516">
    <property type="entry name" value="HisRS/HisZ"/>
</dbReference>
<dbReference type="InterPro" id="IPR004517">
    <property type="entry name" value="HisZ"/>
</dbReference>
<dbReference type="NCBIfam" id="TIGR00443">
    <property type="entry name" value="hisZ_biosyn_reg"/>
    <property type="match status" value="1"/>
</dbReference>
<dbReference type="NCBIfam" id="NF008935">
    <property type="entry name" value="PRK12292.1-1"/>
    <property type="match status" value="1"/>
</dbReference>
<dbReference type="NCBIfam" id="NF008937">
    <property type="entry name" value="PRK12292.1-4"/>
    <property type="match status" value="1"/>
</dbReference>
<dbReference type="NCBIfam" id="NF009086">
    <property type="entry name" value="PRK12421.1"/>
    <property type="match status" value="1"/>
</dbReference>
<dbReference type="PANTHER" id="PTHR11476:SF7">
    <property type="entry name" value="HISTIDINE--TRNA LIGASE"/>
    <property type="match status" value="1"/>
</dbReference>
<dbReference type="PANTHER" id="PTHR11476">
    <property type="entry name" value="HISTIDYL-TRNA SYNTHETASE"/>
    <property type="match status" value="1"/>
</dbReference>
<dbReference type="Pfam" id="PF13393">
    <property type="entry name" value="tRNA-synt_His"/>
    <property type="match status" value="1"/>
</dbReference>
<dbReference type="PIRSF" id="PIRSF001549">
    <property type="entry name" value="His-tRNA_synth"/>
    <property type="match status" value="1"/>
</dbReference>
<dbReference type="SUPFAM" id="SSF55681">
    <property type="entry name" value="Class II aaRS and biotin synthetases"/>
    <property type="match status" value="1"/>
</dbReference>
<protein>
    <recommendedName>
        <fullName evidence="1">ATP phosphoribosyltransferase regulatory subunit</fullName>
    </recommendedName>
</protein>
<sequence>MATVDRWLLPDGIEEVLPPEAARIEVARRQVLDLFQSWGYEFVVTPHIEYLESLLTGAGSDLDLRTFKVIDPQSGRQMGFRADITPQVARIDAHTLKREGPSRLCYAGSVLHAQPRALSSSRSPIQLGAELYGDASPSSDVEVISLMLAMLQLADVPDVHMDLGHVGIYRGLARAAGLSGEVEQQLFDALQRKAIDEVIALTADLPQELATMLRALVDLCGGREVLDAARDRLAGAPAPVLAALDDLLSIAERLAARFPQLPLYFDLGELRGYHYHTGVVFAVFVPGVGQSIAQGGRYDDIGADFGRARPATGFSTDLKTLVTLGQAEIVLPSGGIWVPDSTDAALWQMVCQLRSEGQRVVQALPGQQASAAREADCDRQLIQHGEHWQVMPLAS</sequence>
<feature type="chain" id="PRO_0000242850" description="ATP phosphoribosyltransferase regulatory subunit">
    <location>
        <begin position="1"/>
        <end position="395"/>
    </location>
</feature>
<proteinExistence type="inferred from homology"/>
<keyword id="KW-0028">Amino-acid biosynthesis</keyword>
<keyword id="KW-0963">Cytoplasm</keyword>
<keyword id="KW-0368">Histidine biosynthesis</keyword>
<comment type="function">
    <text evidence="1">Required for the first step of histidine biosynthesis. May allow the feedback regulation of ATP phosphoribosyltransferase activity by histidine.</text>
</comment>
<comment type="pathway">
    <text evidence="1">Amino-acid biosynthesis; L-histidine biosynthesis; L-histidine from 5-phospho-alpha-D-ribose 1-diphosphate: step 1/9.</text>
</comment>
<comment type="subunit">
    <text evidence="1">Heteromultimer composed of HisG and HisZ subunits.</text>
</comment>
<comment type="subcellular location">
    <subcellularLocation>
        <location evidence="1">Cytoplasm</location>
    </subcellularLocation>
</comment>
<comment type="miscellaneous">
    <text>This function is generally fulfilled by the C-terminal part of HisG, which is missing in some bacteria such as this one.</text>
</comment>
<comment type="similarity">
    <text evidence="1">Belongs to the class-II aminoacyl-tRNA synthetase family. HisZ subfamily.</text>
</comment>
<accession>Q4ZYX6</accession>
<reference key="1">
    <citation type="journal article" date="2005" name="Proc. Natl. Acad. Sci. U.S.A.">
        <title>Comparison of the complete genome sequences of Pseudomonas syringae pv. syringae B728a and pv. tomato DC3000.</title>
        <authorList>
            <person name="Feil H."/>
            <person name="Feil W.S."/>
            <person name="Chain P."/>
            <person name="Larimer F."/>
            <person name="Dibartolo G."/>
            <person name="Copeland A."/>
            <person name="Lykidis A."/>
            <person name="Trong S."/>
            <person name="Nolan M."/>
            <person name="Goltsman E."/>
            <person name="Thiel J."/>
            <person name="Malfatti S."/>
            <person name="Loper J.E."/>
            <person name="Lapidus A."/>
            <person name="Detter J.C."/>
            <person name="Land M."/>
            <person name="Richardson P.M."/>
            <person name="Kyrpides N.C."/>
            <person name="Ivanova N."/>
            <person name="Lindow S.E."/>
        </authorList>
    </citation>
    <scope>NUCLEOTIDE SEQUENCE [LARGE SCALE GENOMIC DNA]</scope>
    <source>
        <strain>B728a</strain>
    </source>
</reference>
<gene>
    <name evidence="1" type="primary">hisZ</name>
    <name type="ordered locus">Psyr_0576</name>
</gene>
<name>HISZ_PSEU2</name>
<evidence type="ECO:0000255" key="1">
    <source>
        <dbReference type="HAMAP-Rule" id="MF_00125"/>
    </source>
</evidence>